<feature type="chain" id="PRO_0000142021" description="1-(5-phosphoribosyl)-5-[(5-phosphoribosylamino)methylideneamino] imidazole-4-carboxamide isomerase">
    <location>
        <begin position="1"/>
        <end position="240"/>
    </location>
</feature>
<feature type="active site" description="Proton acceptor" evidence="1">
    <location>
        <position position="8"/>
    </location>
</feature>
<feature type="active site" description="Proton donor" evidence="1">
    <location>
        <position position="129"/>
    </location>
</feature>
<gene>
    <name evidence="1" type="primary">hisA</name>
    <name type="ordered locus">LMOf2365_0593</name>
</gene>
<evidence type="ECO:0000255" key="1">
    <source>
        <dbReference type="HAMAP-Rule" id="MF_01014"/>
    </source>
</evidence>
<keyword id="KW-0028">Amino-acid biosynthesis</keyword>
<keyword id="KW-0963">Cytoplasm</keyword>
<keyword id="KW-0368">Histidine biosynthesis</keyword>
<keyword id="KW-0413">Isomerase</keyword>
<organism>
    <name type="scientific">Listeria monocytogenes serotype 4b (strain F2365)</name>
    <dbReference type="NCBI Taxonomy" id="265669"/>
    <lineage>
        <taxon>Bacteria</taxon>
        <taxon>Bacillati</taxon>
        <taxon>Bacillota</taxon>
        <taxon>Bacilli</taxon>
        <taxon>Bacillales</taxon>
        <taxon>Listeriaceae</taxon>
        <taxon>Listeria</taxon>
    </lineage>
</organism>
<name>HIS4_LISMF</name>
<reference key="1">
    <citation type="journal article" date="2004" name="Nucleic Acids Res.">
        <title>Whole genome comparisons of serotype 4b and 1/2a strains of the food-borne pathogen Listeria monocytogenes reveal new insights into the core genome components of this species.</title>
        <authorList>
            <person name="Nelson K.E."/>
            <person name="Fouts D.E."/>
            <person name="Mongodin E.F."/>
            <person name="Ravel J."/>
            <person name="DeBoy R.T."/>
            <person name="Kolonay J.F."/>
            <person name="Rasko D.A."/>
            <person name="Angiuoli S.V."/>
            <person name="Gill S.R."/>
            <person name="Paulsen I.T."/>
            <person name="Peterson J.D."/>
            <person name="White O."/>
            <person name="Nelson W.C."/>
            <person name="Nierman W.C."/>
            <person name="Beanan M.J."/>
            <person name="Brinkac L.M."/>
            <person name="Daugherty S.C."/>
            <person name="Dodson R.J."/>
            <person name="Durkin A.S."/>
            <person name="Madupu R."/>
            <person name="Haft D.H."/>
            <person name="Selengut J."/>
            <person name="Van Aken S.E."/>
            <person name="Khouri H.M."/>
            <person name="Fedorova N."/>
            <person name="Forberger H.A."/>
            <person name="Tran B."/>
            <person name="Kathariou S."/>
            <person name="Wonderling L.D."/>
            <person name="Uhlich G.A."/>
            <person name="Bayles D.O."/>
            <person name="Luchansky J.B."/>
            <person name="Fraser C.M."/>
        </authorList>
    </citation>
    <scope>NUCLEOTIDE SEQUENCE [LARGE SCALE GENOMIC DNA]</scope>
    <source>
        <strain>F2365</strain>
    </source>
</reference>
<dbReference type="EC" id="5.3.1.16" evidence="1"/>
<dbReference type="EMBL" id="AE017262">
    <property type="protein sequence ID" value="AAT03375.1"/>
    <property type="molecule type" value="Genomic_DNA"/>
</dbReference>
<dbReference type="RefSeq" id="WP_003731317.1">
    <property type="nucleotide sequence ID" value="NC_002973.6"/>
</dbReference>
<dbReference type="SMR" id="Q722Y6"/>
<dbReference type="KEGG" id="lmf:LMOf2365_0593"/>
<dbReference type="HOGENOM" id="CLU_048577_1_1_9"/>
<dbReference type="UniPathway" id="UPA00031">
    <property type="reaction ID" value="UER00009"/>
</dbReference>
<dbReference type="GO" id="GO:0005737">
    <property type="term" value="C:cytoplasm"/>
    <property type="evidence" value="ECO:0007669"/>
    <property type="project" value="UniProtKB-SubCell"/>
</dbReference>
<dbReference type="GO" id="GO:0003949">
    <property type="term" value="F:1-(5-phosphoribosyl)-5-[(5-phosphoribosylamino)methylideneamino]imidazole-4-carboxamide isomerase activity"/>
    <property type="evidence" value="ECO:0007669"/>
    <property type="project" value="UniProtKB-UniRule"/>
</dbReference>
<dbReference type="GO" id="GO:0000105">
    <property type="term" value="P:L-histidine biosynthetic process"/>
    <property type="evidence" value="ECO:0007669"/>
    <property type="project" value="UniProtKB-UniRule"/>
</dbReference>
<dbReference type="GO" id="GO:0000162">
    <property type="term" value="P:L-tryptophan biosynthetic process"/>
    <property type="evidence" value="ECO:0007669"/>
    <property type="project" value="TreeGrafter"/>
</dbReference>
<dbReference type="CDD" id="cd04732">
    <property type="entry name" value="HisA"/>
    <property type="match status" value="1"/>
</dbReference>
<dbReference type="FunFam" id="3.20.20.70:FF:000009">
    <property type="entry name" value="1-(5-phosphoribosyl)-5-[(5-phosphoribosylamino)methylideneamino] imidazole-4-carboxamide isomerase"/>
    <property type="match status" value="1"/>
</dbReference>
<dbReference type="Gene3D" id="3.20.20.70">
    <property type="entry name" value="Aldolase class I"/>
    <property type="match status" value="1"/>
</dbReference>
<dbReference type="HAMAP" id="MF_01014">
    <property type="entry name" value="HisA"/>
    <property type="match status" value="1"/>
</dbReference>
<dbReference type="InterPro" id="IPR013785">
    <property type="entry name" value="Aldolase_TIM"/>
</dbReference>
<dbReference type="InterPro" id="IPR006062">
    <property type="entry name" value="His_biosynth"/>
</dbReference>
<dbReference type="InterPro" id="IPR006063">
    <property type="entry name" value="HisA_bact_arch"/>
</dbReference>
<dbReference type="InterPro" id="IPR044524">
    <property type="entry name" value="Isoase_HisA-like"/>
</dbReference>
<dbReference type="InterPro" id="IPR023016">
    <property type="entry name" value="Isoase_HisA-like_bact"/>
</dbReference>
<dbReference type="InterPro" id="IPR011060">
    <property type="entry name" value="RibuloseP-bd_barrel"/>
</dbReference>
<dbReference type="NCBIfam" id="TIGR00007">
    <property type="entry name" value="1-(5-phosphoribosyl)-5-[(5-phosphoribosylamino)methylideneamino]imidazole-4-carboxamide isomerase"/>
    <property type="match status" value="1"/>
</dbReference>
<dbReference type="PANTHER" id="PTHR43090">
    <property type="entry name" value="1-(5-PHOSPHORIBOSYL)-5-[(5-PHOSPHORIBOSYLAMINO)METHYLIDENEAMINO] IMIDAZOLE-4-CARBOXAMIDE ISOMERASE"/>
    <property type="match status" value="1"/>
</dbReference>
<dbReference type="PANTHER" id="PTHR43090:SF2">
    <property type="entry name" value="1-(5-PHOSPHORIBOSYL)-5-[(5-PHOSPHORIBOSYLAMINO)METHYLIDENEAMINO] IMIDAZOLE-4-CARBOXAMIDE ISOMERASE"/>
    <property type="match status" value="1"/>
</dbReference>
<dbReference type="Pfam" id="PF00977">
    <property type="entry name" value="His_biosynth"/>
    <property type="match status" value="1"/>
</dbReference>
<dbReference type="SUPFAM" id="SSF51366">
    <property type="entry name" value="Ribulose-phoshate binding barrel"/>
    <property type="match status" value="1"/>
</dbReference>
<comment type="catalytic activity">
    <reaction evidence="1">
        <text>1-(5-phospho-beta-D-ribosyl)-5-[(5-phospho-beta-D-ribosylamino)methylideneamino]imidazole-4-carboxamide = 5-[(5-phospho-1-deoxy-D-ribulos-1-ylimino)methylamino]-1-(5-phospho-beta-D-ribosyl)imidazole-4-carboxamide</text>
        <dbReference type="Rhea" id="RHEA:15469"/>
        <dbReference type="ChEBI" id="CHEBI:58435"/>
        <dbReference type="ChEBI" id="CHEBI:58525"/>
        <dbReference type="EC" id="5.3.1.16"/>
    </reaction>
</comment>
<comment type="pathway">
    <text evidence="1">Amino-acid biosynthesis; L-histidine biosynthesis; L-histidine from 5-phospho-alpha-D-ribose 1-diphosphate: step 4/9.</text>
</comment>
<comment type="subcellular location">
    <subcellularLocation>
        <location evidence="1">Cytoplasm</location>
    </subcellularLocation>
</comment>
<comment type="similarity">
    <text evidence="1">Belongs to the HisA/HisF family.</text>
</comment>
<protein>
    <recommendedName>
        <fullName evidence="1">1-(5-phosphoribosyl)-5-[(5-phosphoribosylamino)methylideneamino] imidazole-4-carboxamide isomerase</fullName>
        <ecNumber evidence="1">5.3.1.16</ecNumber>
    </recommendedName>
    <alternativeName>
        <fullName evidence="1">Phosphoribosylformimino-5-aminoimidazole carboxamide ribotide isomerase</fullName>
    </alternativeName>
</protein>
<sequence>MQIFPAIDLKNGQCVRLFQGDFSKKTVVNEDPIAQAKAFATDGATYLHIVDLDGALEGRPINLEIIQRMKKAAKIPVQVGGGIRSMAQVDYYLESGIDRVIIGSAALTNPDFLRAAVQKYGAKIVAGIDAKNGFVATRGWLDVSQVSYLDLAKRMEKVGVETIIYTDISRDGTLTGPNLEQMANLKEHVKVSLIASGGVSSRADLEALAQLGLYGAIAGKALYNHDISMSDIVEVEQIAY</sequence>
<proteinExistence type="inferred from homology"/>
<accession>Q722Y6</accession>